<feature type="chain" id="PRO_0000104859" description="Large ribosomal subunit protein uL15">
    <location>
        <begin position="1"/>
        <end position="179"/>
    </location>
</feature>
<comment type="function">
    <text evidence="1">Binds to the 23S rRNA.</text>
</comment>
<comment type="subunit">
    <text evidence="1">Part of the 50S ribosomal subunit.</text>
</comment>
<comment type="similarity">
    <text evidence="1">Belongs to the universal ribosomal protein uL15 family.</text>
</comment>
<organism>
    <name type="scientific">Archaeoglobus fulgidus (strain ATCC 49558 / DSM 4304 / JCM 9628 / NBRC 100126 / VC-16)</name>
    <dbReference type="NCBI Taxonomy" id="224325"/>
    <lineage>
        <taxon>Archaea</taxon>
        <taxon>Methanobacteriati</taxon>
        <taxon>Methanobacteriota</taxon>
        <taxon>Archaeoglobi</taxon>
        <taxon>Archaeoglobales</taxon>
        <taxon>Archaeoglobaceae</taxon>
        <taxon>Archaeoglobus</taxon>
    </lineage>
</organism>
<keyword id="KW-1185">Reference proteome</keyword>
<keyword id="KW-0687">Ribonucleoprotein</keyword>
<keyword id="KW-0689">Ribosomal protein</keyword>
<keyword id="KW-0694">RNA-binding</keyword>
<keyword id="KW-0699">rRNA-binding</keyword>
<accession>O28376</accession>
<sequence>MILMPKKKVKKFRGSRTFGWGSHKNRRGRGNRGGAGNAGVHKHKYIKFVKLAKKGEYLFGKHGFTRPKILRKDYLNVQAVKETLRWLKEEGKLDDYTYRYLYSRPELNAGDLDEIIDRLASLGLAEKEGDVYRIDLAELGYSKLLGSGKVTRKMEVKVFEATPKAVEKIEAAGGKVVAE</sequence>
<protein>
    <recommendedName>
        <fullName evidence="1">Large ribosomal subunit protein uL15</fullName>
    </recommendedName>
    <alternativeName>
        <fullName evidence="2">50S ribosomal protein L15</fullName>
    </alternativeName>
</protein>
<evidence type="ECO:0000255" key="1">
    <source>
        <dbReference type="HAMAP-Rule" id="MF_01341"/>
    </source>
</evidence>
<evidence type="ECO:0000305" key="2"/>
<reference key="1">
    <citation type="journal article" date="1997" name="Nature">
        <title>The complete genome sequence of the hyperthermophilic, sulphate-reducing archaeon Archaeoglobus fulgidus.</title>
        <authorList>
            <person name="Klenk H.-P."/>
            <person name="Clayton R.A."/>
            <person name="Tomb J.-F."/>
            <person name="White O."/>
            <person name="Nelson K.E."/>
            <person name="Ketchum K.A."/>
            <person name="Dodson R.J."/>
            <person name="Gwinn M.L."/>
            <person name="Hickey E.K."/>
            <person name="Peterson J.D."/>
            <person name="Richardson D.L."/>
            <person name="Kerlavage A.R."/>
            <person name="Graham D.E."/>
            <person name="Kyrpides N.C."/>
            <person name="Fleischmann R.D."/>
            <person name="Quackenbush J."/>
            <person name="Lee N.H."/>
            <person name="Sutton G.G."/>
            <person name="Gill S.R."/>
            <person name="Kirkness E.F."/>
            <person name="Dougherty B.A."/>
            <person name="McKenney K."/>
            <person name="Adams M.D."/>
            <person name="Loftus B.J."/>
            <person name="Peterson S.N."/>
            <person name="Reich C.I."/>
            <person name="McNeil L.K."/>
            <person name="Badger J.H."/>
            <person name="Glodek A."/>
            <person name="Zhou L."/>
            <person name="Overbeek R."/>
            <person name="Gocayne J.D."/>
            <person name="Weidman J.F."/>
            <person name="McDonald L.A."/>
            <person name="Utterback T.R."/>
            <person name="Cotton M.D."/>
            <person name="Spriggs T."/>
            <person name="Artiach P."/>
            <person name="Kaine B.P."/>
            <person name="Sykes S.M."/>
            <person name="Sadow P.W."/>
            <person name="D'Andrea K.P."/>
            <person name="Bowman C."/>
            <person name="Fujii C."/>
            <person name="Garland S.A."/>
            <person name="Mason T.M."/>
            <person name="Olsen G.J."/>
            <person name="Fraser C.M."/>
            <person name="Smith H.O."/>
            <person name="Woese C.R."/>
            <person name="Venter J.C."/>
        </authorList>
    </citation>
    <scope>NUCLEOTIDE SEQUENCE [LARGE SCALE GENOMIC DNA]</scope>
    <source>
        <strain>ATCC 49558 / DSM 4304 / JCM 9628 / NBRC 100126 / VC-16</strain>
    </source>
</reference>
<gene>
    <name evidence="1" type="primary">rpl15</name>
    <name type="ordered locus">AF_1903</name>
</gene>
<name>RL15_ARCFU</name>
<proteinExistence type="inferred from homology"/>
<dbReference type="EMBL" id="AE000782">
    <property type="protein sequence ID" value="AAB89346.1"/>
    <property type="molecule type" value="Genomic_DNA"/>
</dbReference>
<dbReference type="PIR" id="F69487">
    <property type="entry name" value="F69487"/>
</dbReference>
<dbReference type="SMR" id="O28376"/>
<dbReference type="STRING" id="224325.AF_1903"/>
<dbReference type="PaxDb" id="224325-AF_1903"/>
<dbReference type="EnsemblBacteria" id="AAB89346">
    <property type="protein sequence ID" value="AAB89346"/>
    <property type="gene ID" value="AF_1903"/>
</dbReference>
<dbReference type="KEGG" id="afu:AF_1903"/>
<dbReference type="eggNOG" id="arCOG00779">
    <property type="taxonomic scope" value="Archaea"/>
</dbReference>
<dbReference type="HOGENOM" id="CLU_109163_0_0_2"/>
<dbReference type="PhylomeDB" id="O28376"/>
<dbReference type="Proteomes" id="UP000002199">
    <property type="component" value="Chromosome"/>
</dbReference>
<dbReference type="GO" id="GO:0022625">
    <property type="term" value="C:cytosolic large ribosomal subunit"/>
    <property type="evidence" value="ECO:0007669"/>
    <property type="project" value="TreeGrafter"/>
</dbReference>
<dbReference type="GO" id="GO:0019843">
    <property type="term" value="F:rRNA binding"/>
    <property type="evidence" value="ECO:0007669"/>
    <property type="project" value="UniProtKB-UniRule"/>
</dbReference>
<dbReference type="GO" id="GO:0003735">
    <property type="term" value="F:structural constituent of ribosome"/>
    <property type="evidence" value="ECO:0007669"/>
    <property type="project" value="InterPro"/>
</dbReference>
<dbReference type="GO" id="GO:0006412">
    <property type="term" value="P:translation"/>
    <property type="evidence" value="ECO:0007669"/>
    <property type="project" value="UniProtKB-UniRule"/>
</dbReference>
<dbReference type="Gene3D" id="3.100.10.10">
    <property type="match status" value="1"/>
</dbReference>
<dbReference type="Gene3D" id="4.10.990.10">
    <property type="match status" value="1"/>
</dbReference>
<dbReference type="HAMAP" id="MF_01341">
    <property type="entry name" value="Ribosomal_uL15"/>
    <property type="match status" value="1"/>
</dbReference>
<dbReference type="InterPro" id="IPR027386">
    <property type="entry name" value="Rbsml_uL15_N"/>
</dbReference>
<dbReference type="InterPro" id="IPR030878">
    <property type="entry name" value="Ribosomal_uL15"/>
</dbReference>
<dbReference type="InterPro" id="IPR021131">
    <property type="entry name" value="Ribosomal_uL15/eL18"/>
</dbReference>
<dbReference type="InterPro" id="IPR036227">
    <property type="entry name" value="Ribosomal_uL15/eL18_sf"/>
</dbReference>
<dbReference type="InterPro" id="IPR001196">
    <property type="entry name" value="Ribosomal_uL15_CS"/>
</dbReference>
<dbReference type="PANTHER" id="PTHR11721">
    <property type="entry name" value="60S RIBOSOMAL PROTEIN L27A"/>
    <property type="match status" value="1"/>
</dbReference>
<dbReference type="PANTHER" id="PTHR11721:SF3">
    <property type="entry name" value="LARGE RIBOSOMAL SUBUNIT PROTEIN UL15"/>
    <property type="match status" value="1"/>
</dbReference>
<dbReference type="Pfam" id="PF00828">
    <property type="entry name" value="Ribosomal_L27A"/>
    <property type="match status" value="1"/>
</dbReference>
<dbReference type="SUPFAM" id="SSF52080">
    <property type="entry name" value="Ribosomal proteins L15p and L18e"/>
    <property type="match status" value="2"/>
</dbReference>
<dbReference type="PROSITE" id="PS00475">
    <property type="entry name" value="RIBOSOMAL_L15"/>
    <property type="match status" value="1"/>
</dbReference>